<keyword id="KW-0058">Aromatic hydrocarbons catabolism</keyword>
<keyword id="KW-0520">NAD</keyword>
<keyword id="KW-0560">Oxidoreductase</keyword>
<keyword id="KW-1185">Reference proteome</keyword>
<protein>
    <recommendedName>
        <fullName evidence="1">Acetaldehyde dehydrogenase</fullName>
        <ecNumber evidence="1">1.2.1.10</ecNumber>
    </recommendedName>
    <alternativeName>
        <fullName evidence="1">Acetaldehyde dehydrogenase [acetylating]</fullName>
    </alternativeName>
</protein>
<evidence type="ECO:0000255" key="1">
    <source>
        <dbReference type="HAMAP-Rule" id="MF_01657"/>
    </source>
</evidence>
<comment type="catalytic activity">
    <reaction evidence="1">
        <text>acetaldehyde + NAD(+) + CoA = acetyl-CoA + NADH + H(+)</text>
        <dbReference type="Rhea" id="RHEA:23288"/>
        <dbReference type="ChEBI" id="CHEBI:15343"/>
        <dbReference type="ChEBI" id="CHEBI:15378"/>
        <dbReference type="ChEBI" id="CHEBI:57287"/>
        <dbReference type="ChEBI" id="CHEBI:57288"/>
        <dbReference type="ChEBI" id="CHEBI:57540"/>
        <dbReference type="ChEBI" id="CHEBI:57945"/>
        <dbReference type="EC" id="1.2.1.10"/>
    </reaction>
</comment>
<comment type="similarity">
    <text evidence="1">Belongs to the acetaldehyde dehydrogenase family.</text>
</comment>
<reference key="1">
    <citation type="journal article" date="2007" name="Proc. Natl. Acad. Sci. U.S.A.">
        <title>Genome sequencing reveals complex secondary metabolome in the marine actinomycete Salinispora tropica.</title>
        <authorList>
            <person name="Udwary D.W."/>
            <person name="Zeigler L."/>
            <person name="Asolkar R.N."/>
            <person name="Singan V."/>
            <person name="Lapidus A."/>
            <person name="Fenical W."/>
            <person name="Jensen P.R."/>
            <person name="Moore B.S."/>
        </authorList>
    </citation>
    <scope>NUCLEOTIDE SEQUENCE [LARGE SCALE GENOMIC DNA]</scope>
    <source>
        <strain>ATCC BAA-916 / DSM 44818 / JCM 13857 / NBRC 105044 / CNB-440</strain>
    </source>
</reference>
<accession>A4XAK8</accession>
<organism>
    <name type="scientific">Salinispora tropica (strain ATCC BAA-916 / DSM 44818 / JCM 13857 / NBRC 105044 / CNB-440)</name>
    <dbReference type="NCBI Taxonomy" id="369723"/>
    <lineage>
        <taxon>Bacteria</taxon>
        <taxon>Bacillati</taxon>
        <taxon>Actinomycetota</taxon>
        <taxon>Actinomycetes</taxon>
        <taxon>Micromonosporales</taxon>
        <taxon>Micromonosporaceae</taxon>
        <taxon>Salinispora</taxon>
    </lineage>
</organism>
<sequence length="308" mass="32155">MSVGVAVLGSGNIGTDLMIKVLRLSDSLRMVAMAGIDPDSDGLARARRLGVTTTAEGVAGLVALPEFADVALVFDATSAGAHRHHDAVLRAHGRTVVDLTPAAVGPYVVPPVNLDEHLRETNVNMVTCGGQATVPIVAAVGRVTPVTYGEIVASIAAKSAGPGTRANIDEFTETTARAIEVVGGAELGKAIIVLNPADPPLLMRDTVYCLCPDTDADRSAIAAAIADMVRAVQEYVPGYCLKQDVQFDRVDSYLPALGRRLTGLQVSTFLEVSGAGHYLPTYAGNLDIMTSAALRTAERLIARRAVTA</sequence>
<feature type="chain" id="PRO_0000387738" description="Acetaldehyde dehydrogenase">
    <location>
        <begin position="1"/>
        <end position="308"/>
    </location>
</feature>
<feature type="active site" description="Acyl-thioester intermediate" evidence="1">
    <location>
        <position position="128"/>
    </location>
</feature>
<feature type="binding site" evidence="1">
    <location>
        <begin position="10"/>
        <end position="13"/>
    </location>
    <ligand>
        <name>NAD(+)</name>
        <dbReference type="ChEBI" id="CHEBI:57540"/>
    </ligand>
</feature>
<feature type="binding site" evidence="1">
    <location>
        <begin position="159"/>
        <end position="167"/>
    </location>
    <ligand>
        <name>NAD(+)</name>
        <dbReference type="ChEBI" id="CHEBI:57540"/>
    </ligand>
</feature>
<feature type="binding site" evidence="1">
    <location>
        <position position="285"/>
    </location>
    <ligand>
        <name>NAD(+)</name>
        <dbReference type="ChEBI" id="CHEBI:57540"/>
    </ligand>
</feature>
<name>ACDH_SALTO</name>
<dbReference type="EC" id="1.2.1.10" evidence="1"/>
<dbReference type="EMBL" id="CP000667">
    <property type="protein sequence ID" value="ABP55957.1"/>
    <property type="molecule type" value="Genomic_DNA"/>
</dbReference>
<dbReference type="RefSeq" id="WP_012014732.1">
    <property type="nucleotide sequence ID" value="NC_009380.1"/>
</dbReference>
<dbReference type="SMR" id="A4XAK8"/>
<dbReference type="STRING" id="369723.Strop_3526"/>
<dbReference type="KEGG" id="stp:Strop_3526"/>
<dbReference type="PATRIC" id="fig|369723.5.peg.3640"/>
<dbReference type="eggNOG" id="COG4569">
    <property type="taxonomic scope" value="Bacteria"/>
</dbReference>
<dbReference type="HOGENOM" id="CLU_062208_0_0_11"/>
<dbReference type="Proteomes" id="UP000000235">
    <property type="component" value="Chromosome"/>
</dbReference>
<dbReference type="GO" id="GO:0008774">
    <property type="term" value="F:acetaldehyde dehydrogenase (acetylating) activity"/>
    <property type="evidence" value="ECO:0007669"/>
    <property type="project" value="UniProtKB-UniRule"/>
</dbReference>
<dbReference type="GO" id="GO:0051287">
    <property type="term" value="F:NAD binding"/>
    <property type="evidence" value="ECO:0007669"/>
    <property type="project" value="UniProtKB-UniRule"/>
</dbReference>
<dbReference type="GO" id="GO:0009056">
    <property type="term" value="P:catabolic process"/>
    <property type="evidence" value="ECO:0007669"/>
    <property type="project" value="UniProtKB-KW"/>
</dbReference>
<dbReference type="CDD" id="cd23933">
    <property type="entry name" value="ALDH_C"/>
    <property type="match status" value="1"/>
</dbReference>
<dbReference type="Gene3D" id="3.30.360.10">
    <property type="entry name" value="Dihydrodipicolinate Reductase, domain 2"/>
    <property type="match status" value="1"/>
</dbReference>
<dbReference type="Gene3D" id="3.40.50.720">
    <property type="entry name" value="NAD(P)-binding Rossmann-like Domain"/>
    <property type="match status" value="1"/>
</dbReference>
<dbReference type="HAMAP" id="MF_01657">
    <property type="entry name" value="Ac_ald_DH_ac"/>
    <property type="match status" value="1"/>
</dbReference>
<dbReference type="InterPro" id="IPR003361">
    <property type="entry name" value="Acetaldehyde_dehydrogenase"/>
</dbReference>
<dbReference type="InterPro" id="IPR015426">
    <property type="entry name" value="Acetylaldehyde_DH_C"/>
</dbReference>
<dbReference type="InterPro" id="IPR036291">
    <property type="entry name" value="NAD(P)-bd_dom_sf"/>
</dbReference>
<dbReference type="InterPro" id="IPR000534">
    <property type="entry name" value="Semialdehyde_DH_NAD-bd"/>
</dbReference>
<dbReference type="NCBIfam" id="TIGR03215">
    <property type="entry name" value="ac_ald_DH_ac"/>
    <property type="match status" value="1"/>
</dbReference>
<dbReference type="NCBIfam" id="NF006157">
    <property type="entry name" value="PRK08300.1"/>
    <property type="match status" value="1"/>
</dbReference>
<dbReference type="Pfam" id="PF09290">
    <property type="entry name" value="AcetDehyd-dimer"/>
    <property type="match status" value="1"/>
</dbReference>
<dbReference type="Pfam" id="PF01118">
    <property type="entry name" value="Semialdhyde_dh"/>
    <property type="match status" value="1"/>
</dbReference>
<dbReference type="PIRSF" id="PIRSF015689">
    <property type="entry name" value="Actaldh_dh_actl"/>
    <property type="match status" value="1"/>
</dbReference>
<dbReference type="SMART" id="SM00859">
    <property type="entry name" value="Semialdhyde_dh"/>
    <property type="match status" value="1"/>
</dbReference>
<dbReference type="SUPFAM" id="SSF55347">
    <property type="entry name" value="Glyceraldehyde-3-phosphate dehydrogenase-like, C-terminal domain"/>
    <property type="match status" value="1"/>
</dbReference>
<dbReference type="SUPFAM" id="SSF51735">
    <property type="entry name" value="NAD(P)-binding Rossmann-fold domains"/>
    <property type="match status" value="1"/>
</dbReference>
<gene>
    <name type="ordered locus">Strop_3526</name>
</gene>
<proteinExistence type="inferred from homology"/>